<evidence type="ECO:0000255" key="1">
    <source>
        <dbReference type="HAMAP-Rule" id="MF_01187"/>
    </source>
</evidence>
<organism>
    <name type="scientific">Rhodopseudomonas palustris (strain BisB18)</name>
    <dbReference type="NCBI Taxonomy" id="316056"/>
    <lineage>
        <taxon>Bacteria</taxon>
        <taxon>Pseudomonadati</taxon>
        <taxon>Pseudomonadota</taxon>
        <taxon>Alphaproteobacteria</taxon>
        <taxon>Hyphomicrobiales</taxon>
        <taxon>Nitrobacteraceae</taxon>
        <taxon>Rhodopseudomonas</taxon>
    </lineage>
</organism>
<protein>
    <recommendedName>
        <fullName evidence="1">UPF0434 protein RPC_0266</fullName>
    </recommendedName>
</protein>
<comment type="similarity">
    <text evidence="1">Belongs to the UPF0434 family.</text>
</comment>
<accession>Q21CP5</accession>
<feature type="chain" id="PRO_0000291153" description="UPF0434 protein RPC_0266">
    <location>
        <begin position="1"/>
        <end position="66"/>
    </location>
</feature>
<dbReference type="EMBL" id="CP000301">
    <property type="protein sequence ID" value="ABD85841.1"/>
    <property type="molecule type" value="Genomic_DNA"/>
</dbReference>
<dbReference type="SMR" id="Q21CP5"/>
<dbReference type="STRING" id="316056.RPC_0266"/>
<dbReference type="KEGG" id="rpc:RPC_0266"/>
<dbReference type="eggNOG" id="COG2835">
    <property type="taxonomic scope" value="Bacteria"/>
</dbReference>
<dbReference type="HOGENOM" id="CLU_155659_2_2_5"/>
<dbReference type="OrthoDB" id="9812205at2"/>
<dbReference type="GO" id="GO:0005829">
    <property type="term" value="C:cytosol"/>
    <property type="evidence" value="ECO:0007669"/>
    <property type="project" value="TreeGrafter"/>
</dbReference>
<dbReference type="FunFam" id="2.20.25.10:FF:000002">
    <property type="entry name" value="UPF0434 protein YcaR"/>
    <property type="match status" value="1"/>
</dbReference>
<dbReference type="Gene3D" id="2.20.25.10">
    <property type="match status" value="1"/>
</dbReference>
<dbReference type="HAMAP" id="MF_01187">
    <property type="entry name" value="UPF0434"/>
    <property type="match status" value="1"/>
</dbReference>
<dbReference type="InterPro" id="IPR005651">
    <property type="entry name" value="Trm112-like"/>
</dbReference>
<dbReference type="PANTHER" id="PTHR33505:SF4">
    <property type="entry name" value="PROTEIN PREY, MITOCHONDRIAL"/>
    <property type="match status" value="1"/>
</dbReference>
<dbReference type="PANTHER" id="PTHR33505">
    <property type="entry name" value="ZGC:162634"/>
    <property type="match status" value="1"/>
</dbReference>
<dbReference type="Pfam" id="PF03966">
    <property type="entry name" value="Trm112p"/>
    <property type="match status" value="1"/>
</dbReference>
<dbReference type="SUPFAM" id="SSF158997">
    <property type="entry name" value="Trm112p-like"/>
    <property type="match status" value="1"/>
</dbReference>
<reference key="1">
    <citation type="submission" date="2006-03" db="EMBL/GenBank/DDBJ databases">
        <title>Complete sequence of Rhodopseudomonas palustris BisB18.</title>
        <authorList>
            <consortium name="US DOE Joint Genome Institute"/>
            <person name="Copeland A."/>
            <person name="Lucas S."/>
            <person name="Lapidus A."/>
            <person name="Barry K."/>
            <person name="Detter J.C."/>
            <person name="Glavina del Rio T."/>
            <person name="Hammon N."/>
            <person name="Israni S."/>
            <person name="Dalin E."/>
            <person name="Tice H."/>
            <person name="Pitluck S."/>
            <person name="Chain P."/>
            <person name="Malfatti S."/>
            <person name="Shin M."/>
            <person name="Vergez L."/>
            <person name="Schmutz J."/>
            <person name="Larimer F."/>
            <person name="Land M."/>
            <person name="Hauser L."/>
            <person name="Pelletier D.A."/>
            <person name="Kyrpides N."/>
            <person name="Anderson I."/>
            <person name="Oda Y."/>
            <person name="Harwood C.S."/>
            <person name="Richardson P."/>
        </authorList>
    </citation>
    <scope>NUCLEOTIDE SEQUENCE [LARGE SCALE GENOMIC DNA]</scope>
    <source>
        <strain>BisB18</strain>
    </source>
</reference>
<name>Y266_RHOPB</name>
<proteinExistence type="inferred from homology"/>
<gene>
    <name type="ordered locus">RPC_0266</name>
</gene>
<sequence length="66" mass="7205">MTTSASDRPEAGVDRKLLDILVCPITKGPLEFDAARQELISRGAKLAYPIRDGIPIMLPEEARKLG</sequence>